<protein>
    <recommendedName>
        <fullName>45 kDa calcium-binding protein</fullName>
        <shortName>Cab45</shortName>
    </recommendedName>
    <alternativeName>
        <fullName>Stromal cell-derived factor 4</fullName>
        <shortName>SDF-4</shortName>
    </alternativeName>
</protein>
<dbReference type="EMBL" id="AF405545">
    <property type="protein sequence ID" value="AAL01370.1"/>
    <property type="molecule type" value="mRNA"/>
</dbReference>
<dbReference type="EMBL" id="BC086996">
    <property type="protein sequence ID" value="AAH86996.1"/>
    <property type="molecule type" value="mRNA"/>
</dbReference>
<dbReference type="RefSeq" id="NP_569096.2">
    <property type="nucleotide sequence ID" value="NM_130412.2"/>
</dbReference>
<dbReference type="FunCoup" id="Q91ZS3">
    <property type="interactions" value="954"/>
</dbReference>
<dbReference type="STRING" id="10116.ENSRNOP00000027215"/>
<dbReference type="GlyCosmos" id="Q91ZS3">
    <property type="glycosylation" value="1 site, No reported glycans"/>
</dbReference>
<dbReference type="GlyGen" id="Q91ZS3">
    <property type="glycosylation" value="1 site"/>
</dbReference>
<dbReference type="iPTMnet" id="Q91ZS3"/>
<dbReference type="PhosphoSitePlus" id="Q91ZS3"/>
<dbReference type="jPOST" id="Q91ZS3"/>
<dbReference type="PaxDb" id="10116-ENSRNOP00000027215"/>
<dbReference type="GeneID" id="155173"/>
<dbReference type="KEGG" id="rno:155173"/>
<dbReference type="AGR" id="RGD:621521"/>
<dbReference type="CTD" id="51150"/>
<dbReference type="RGD" id="621521">
    <property type="gene designation" value="Sdf4"/>
</dbReference>
<dbReference type="eggNOG" id="KOG4251">
    <property type="taxonomic scope" value="Eukaryota"/>
</dbReference>
<dbReference type="InParanoid" id="Q91ZS3"/>
<dbReference type="PhylomeDB" id="Q91ZS3"/>
<dbReference type="TreeFam" id="TF314849"/>
<dbReference type="PRO" id="PR:Q91ZS3"/>
<dbReference type="Proteomes" id="UP000002494">
    <property type="component" value="Unplaced"/>
</dbReference>
<dbReference type="GO" id="GO:0005737">
    <property type="term" value="C:cytoplasm"/>
    <property type="evidence" value="ECO:0000314"/>
    <property type="project" value="BHF-UCL"/>
</dbReference>
<dbReference type="GO" id="GO:0005783">
    <property type="term" value="C:endoplasmic reticulum"/>
    <property type="evidence" value="ECO:0000318"/>
    <property type="project" value="GO_Central"/>
</dbReference>
<dbReference type="GO" id="GO:0005796">
    <property type="term" value="C:Golgi lumen"/>
    <property type="evidence" value="ECO:0000250"/>
    <property type="project" value="BHF-UCL"/>
</dbReference>
<dbReference type="GO" id="GO:0005770">
    <property type="term" value="C:late endosome"/>
    <property type="evidence" value="ECO:0000314"/>
    <property type="project" value="BHF-UCL"/>
</dbReference>
<dbReference type="GO" id="GO:0005509">
    <property type="term" value="F:calcium ion binding"/>
    <property type="evidence" value="ECO:0000250"/>
    <property type="project" value="BHF-UCL"/>
</dbReference>
<dbReference type="GO" id="GO:0042802">
    <property type="term" value="F:identical protein binding"/>
    <property type="evidence" value="ECO:0000353"/>
    <property type="project" value="BHF-UCL"/>
</dbReference>
<dbReference type="GO" id="GO:0017156">
    <property type="term" value="P:calcium-ion regulated exocytosis"/>
    <property type="evidence" value="ECO:0000315"/>
    <property type="project" value="BHF-UCL"/>
</dbReference>
<dbReference type="GO" id="GO:0021549">
    <property type="term" value="P:cerebellum development"/>
    <property type="evidence" value="ECO:0000270"/>
    <property type="project" value="BHF-UCL"/>
</dbReference>
<dbReference type="GO" id="GO:0045444">
    <property type="term" value="P:fat cell differentiation"/>
    <property type="evidence" value="ECO:0000250"/>
    <property type="project" value="BHF-UCL"/>
</dbReference>
<dbReference type="GO" id="GO:0099558">
    <property type="term" value="P:maintenance of synapse structure"/>
    <property type="evidence" value="ECO:0000266"/>
    <property type="project" value="RGD"/>
</dbReference>
<dbReference type="GO" id="GO:0045471">
    <property type="term" value="P:response to ethanol"/>
    <property type="evidence" value="ECO:0000270"/>
    <property type="project" value="BHF-UCL"/>
</dbReference>
<dbReference type="GO" id="GO:0009650">
    <property type="term" value="P:UV protection"/>
    <property type="evidence" value="ECO:0000315"/>
    <property type="project" value="BHF-UCL"/>
</dbReference>
<dbReference type="GO" id="GO:0070625">
    <property type="term" value="P:zymogen granule exocytosis"/>
    <property type="evidence" value="ECO:0000315"/>
    <property type="project" value="BHF-UCL"/>
</dbReference>
<dbReference type="CDD" id="cd16225">
    <property type="entry name" value="EFh_CREC_cab45"/>
    <property type="match status" value="1"/>
</dbReference>
<dbReference type="FunFam" id="1.10.238.10:FF:000120">
    <property type="entry name" value="45 kDa calcium-binding protein"/>
    <property type="match status" value="1"/>
</dbReference>
<dbReference type="FunFam" id="1.10.238.10:FF:000207">
    <property type="entry name" value="Putative 45 kDa calcium-binding protein"/>
    <property type="match status" value="1"/>
</dbReference>
<dbReference type="Gene3D" id="1.10.238.10">
    <property type="entry name" value="EF-hand"/>
    <property type="match status" value="2"/>
</dbReference>
<dbReference type="InterPro" id="IPR027240">
    <property type="entry name" value="CAB45_EFh"/>
</dbReference>
<dbReference type="InterPro" id="IPR011992">
    <property type="entry name" value="EF-hand-dom_pair"/>
</dbReference>
<dbReference type="InterPro" id="IPR018247">
    <property type="entry name" value="EF_Hand_1_Ca_BS"/>
</dbReference>
<dbReference type="InterPro" id="IPR002048">
    <property type="entry name" value="EF_hand_dom"/>
</dbReference>
<dbReference type="PANTHER" id="PTHR10827:SF98">
    <property type="entry name" value="45 KDA CALCIUM-BINDING PROTEIN"/>
    <property type="match status" value="1"/>
</dbReference>
<dbReference type="PANTHER" id="PTHR10827">
    <property type="entry name" value="RETICULOCALBIN"/>
    <property type="match status" value="1"/>
</dbReference>
<dbReference type="Pfam" id="PF13202">
    <property type="entry name" value="EF-hand_5"/>
    <property type="match status" value="1"/>
</dbReference>
<dbReference type="Pfam" id="PF13499">
    <property type="entry name" value="EF-hand_7"/>
    <property type="match status" value="1"/>
</dbReference>
<dbReference type="SMART" id="SM00054">
    <property type="entry name" value="EFh"/>
    <property type="match status" value="5"/>
</dbReference>
<dbReference type="SUPFAM" id="SSF47473">
    <property type="entry name" value="EF-hand"/>
    <property type="match status" value="2"/>
</dbReference>
<dbReference type="PROSITE" id="PS00018">
    <property type="entry name" value="EF_HAND_1"/>
    <property type="match status" value="5"/>
</dbReference>
<dbReference type="PROSITE" id="PS50222">
    <property type="entry name" value="EF_HAND_2"/>
    <property type="match status" value="5"/>
</dbReference>
<proteinExistence type="evidence at protein level"/>
<gene>
    <name type="primary">Sdf4</name>
    <name type="synonym">Cab45</name>
</gene>
<organism>
    <name type="scientific">Rattus norvegicus</name>
    <name type="common">Rat</name>
    <dbReference type="NCBI Taxonomy" id="10116"/>
    <lineage>
        <taxon>Eukaryota</taxon>
        <taxon>Metazoa</taxon>
        <taxon>Chordata</taxon>
        <taxon>Craniata</taxon>
        <taxon>Vertebrata</taxon>
        <taxon>Euteleostomi</taxon>
        <taxon>Mammalia</taxon>
        <taxon>Eutheria</taxon>
        <taxon>Euarchontoglires</taxon>
        <taxon>Glires</taxon>
        <taxon>Rodentia</taxon>
        <taxon>Myomorpha</taxon>
        <taxon>Muroidea</taxon>
        <taxon>Muridae</taxon>
        <taxon>Murinae</taxon>
        <taxon>Rattus</taxon>
    </lineage>
</organism>
<feature type="signal peptide" evidence="4">
    <location>
        <begin position="1"/>
        <end position="35"/>
    </location>
</feature>
<feature type="chain" id="PRO_0000004158" description="45 kDa calcium-binding protein">
    <location>
        <begin position="36"/>
        <end position="361"/>
    </location>
</feature>
<feature type="domain" description="EF-hand 1" evidence="5">
    <location>
        <begin position="97"/>
        <end position="132"/>
    </location>
</feature>
<feature type="domain" description="EF-hand 2" evidence="5">
    <location>
        <begin position="136"/>
        <end position="171"/>
    </location>
</feature>
<feature type="domain" description="EF-hand 3" evidence="9">
    <location>
        <begin position="196"/>
        <end position="231"/>
    </location>
</feature>
<feature type="domain" description="EF-hand 4" evidence="5">
    <location>
        <begin position="232"/>
        <end position="267"/>
    </location>
</feature>
<feature type="domain" description="EF-hand 5" evidence="5">
    <location>
        <begin position="277"/>
        <end position="312"/>
    </location>
</feature>
<feature type="domain" description="EF-hand 6" evidence="5">
    <location>
        <begin position="313"/>
        <end position="348"/>
    </location>
</feature>
<feature type="region of interest" description="Necessary for intracellular retention in Golgi apparatus lumen" evidence="1">
    <location>
        <begin position="308"/>
        <end position="361"/>
    </location>
</feature>
<feature type="binding site" evidence="5">
    <location>
        <position position="110"/>
    </location>
    <ligand>
        <name>Ca(2+)</name>
        <dbReference type="ChEBI" id="CHEBI:29108"/>
        <label>1</label>
    </ligand>
</feature>
<feature type="binding site" evidence="5">
    <location>
        <position position="112"/>
    </location>
    <ligand>
        <name>Ca(2+)</name>
        <dbReference type="ChEBI" id="CHEBI:29108"/>
        <label>1</label>
    </ligand>
</feature>
<feature type="binding site" evidence="5">
    <location>
        <position position="114"/>
    </location>
    <ligand>
        <name>Ca(2+)</name>
        <dbReference type="ChEBI" id="CHEBI:29108"/>
        <label>1</label>
    </ligand>
</feature>
<feature type="binding site" evidence="5">
    <location>
        <position position="116"/>
    </location>
    <ligand>
        <name>Ca(2+)</name>
        <dbReference type="ChEBI" id="CHEBI:29108"/>
        <label>1</label>
    </ligand>
</feature>
<feature type="binding site" evidence="5">
    <location>
        <position position="121"/>
    </location>
    <ligand>
        <name>Ca(2+)</name>
        <dbReference type="ChEBI" id="CHEBI:29108"/>
        <label>1</label>
    </ligand>
</feature>
<feature type="binding site" evidence="5">
    <location>
        <position position="149"/>
    </location>
    <ligand>
        <name>Ca(2+)</name>
        <dbReference type="ChEBI" id="CHEBI:29108"/>
        <label>2</label>
    </ligand>
</feature>
<feature type="binding site" evidence="5">
    <location>
        <position position="151"/>
    </location>
    <ligand>
        <name>Ca(2+)</name>
        <dbReference type="ChEBI" id="CHEBI:29108"/>
        <label>2</label>
    </ligand>
</feature>
<feature type="binding site" evidence="5">
    <location>
        <position position="153"/>
    </location>
    <ligand>
        <name>Ca(2+)</name>
        <dbReference type="ChEBI" id="CHEBI:29108"/>
        <label>2</label>
    </ligand>
</feature>
<feature type="binding site" evidence="5">
    <location>
        <position position="155"/>
    </location>
    <ligand>
        <name>Ca(2+)</name>
        <dbReference type="ChEBI" id="CHEBI:29108"/>
        <label>2</label>
    </ligand>
</feature>
<feature type="binding site" evidence="5">
    <location>
        <position position="160"/>
    </location>
    <ligand>
        <name>Ca(2+)</name>
        <dbReference type="ChEBI" id="CHEBI:29108"/>
        <label>2</label>
    </ligand>
</feature>
<feature type="binding site" evidence="9">
    <location>
        <position position="212"/>
    </location>
    <ligand>
        <name>Ca(2+)</name>
        <dbReference type="ChEBI" id="CHEBI:29108"/>
        <label>3</label>
    </ligand>
</feature>
<feature type="binding site" evidence="9">
    <location>
        <position position="219"/>
    </location>
    <ligand>
        <name>Ca(2+)</name>
        <dbReference type="ChEBI" id="CHEBI:29108"/>
        <label>3</label>
    </ligand>
</feature>
<feature type="binding site" evidence="5">
    <location>
        <position position="245"/>
    </location>
    <ligand>
        <name>Ca(2+)</name>
        <dbReference type="ChEBI" id="CHEBI:29108"/>
        <label>4</label>
    </ligand>
</feature>
<feature type="binding site" evidence="5">
    <location>
        <position position="247"/>
    </location>
    <ligand>
        <name>Ca(2+)</name>
        <dbReference type="ChEBI" id="CHEBI:29108"/>
        <label>4</label>
    </ligand>
</feature>
<feature type="binding site" evidence="5">
    <location>
        <position position="249"/>
    </location>
    <ligand>
        <name>Ca(2+)</name>
        <dbReference type="ChEBI" id="CHEBI:29108"/>
        <label>4</label>
    </ligand>
</feature>
<feature type="binding site" evidence="5">
    <location>
        <position position="251"/>
    </location>
    <ligand>
        <name>Ca(2+)</name>
        <dbReference type="ChEBI" id="CHEBI:29108"/>
        <label>4</label>
    </ligand>
</feature>
<feature type="binding site" evidence="5">
    <location>
        <position position="256"/>
    </location>
    <ligand>
        <name>Ca(2+)</name>
        <dbReference type="ChEBI" id="CHEBI:29108"/>
        <label>4</label>
    </ligand>
</feature>
<feature type="binding site" evidence="5">
    <location>
        <position position="290"/>
    </location>
    <ligand>
        <name>Ca(2+)</name>
        <dbReference type="ChEBI" id="CHEBI:29108"/>
        <label>5</label>
    </ligand>
</feature>
<feature type="binding site" evidence="5">
    <location>
        <position position="292"/>
    </location>
    <ligand>
        <name>Ca(2+)</name>
        <dbReference type="ChEBI" id="CHEBI:29108"/>
        <label>5</label>
    </ligand>
</feature>
<feature type="binding site" evidence="5">
    <location>
        <position position="294"/>
    </location>
    <ligand>
        <name>Ca(2+)</name>
        <dbReference type="ChEBI" id="CHEBI:29108"/>
        <label>5</label>
    </ligand>
</feature>
<feature type="binding site" evidence="5">
    <location>
        <position position="301"/>
    </location>
    <ligand>
        <name>Ca(2+)</name>
        <dbReference type="ChEBI" id="CHEBI:29108"/>
        <label>5</label>
    </ligand>
</feature>
<feature type="binding site" evidence="5">
    <location>
        <position position="326"/>
    </location>
    <ligand>
        <name>Ca(2+)</name>
        <dbReference type="ChEBI" id="CHEBI:29108"/>
        <label>6</label>
    </ligand>
</feature>
<feature type="binding site" evidence="5">
    <location>
        <position position="328"/>
    </location>
    <ligand>
        <name>Ca(2+)</name>
        <dbReference type="ChEBI" id="CHEBI:29108"/>
        <label>6</label>
    </ligand>
</feature>
<feature type="binding site" evidence="5">
    <location>
        <position position="330"/>
    </location>
    <ligand>
        <name>Ca(2+)</name>
        <dbReference type="ChEBI" id="CHEBI:29108"/>
        <label>6</label>
    </ligand>
</feature>
<feature type="binding site" evidence="5">
    <location>
        <position position="332"/>
    </location>
    <ligand>
        <name>Ca(2+)</name>
        <dbReference type="ChEBI" id="CHEBI:29108"/>
        <label>6</label>
    </ligand>
</feature>
<feature type="binding site" evidence="5">
    <location>
        <position position="337"/>
    </location>
    <ligand>
        <name>Ca(2+)</name>
        <dbReference type="ChEBI" id="CHEBI:29108"/>
        <label>6</label>
    </ligand>
</feature>
<feature type="modified residue" description="Phosphoserine" evidence="3">
    <location>
        <position position="98"/>
    </location>
</feature>
<feature type="modified residue" description="Phosphothreonine" evidence="10">
    <location>
        <position position="192"/>
    </location>
</feature>
<feature type="modified residue" description="Phosphothreonine" evidence="3">
    <location>
        <position position="216"/>
    </location>
</feature>
<feature type="modified residue" description="Phosphothreonine" evidence="3">
    <location>
        <position position="264"/>
    </location>
</feature>
<feature type="modified residue" description="Phosphothreonine" evidence="3">
    <location>
        <position position="298"/>
    </location>
</feature>
<feature type="glycosylation site" description="N-linked (GlcNAc...) asparagine" evidence="4">
    <location>
        <position position="39"/>
    </location>
</feature>
<feature type="splice variant" id="VSP_037452" description="In isoform 2." evidence="8">
    <original>M</original>
    <variation>MTSRAPNCAPQTRRIRKPGSPV</variation>
    <location>
        <position position="1"/>
    </location>
</feature>
<feature type="sequence conflict" description="In Ref. 2; AAH86996." evidence="9" ref="2">
    <original>V</original>
    <variation>A</variation>
    <location>
        <position position="5"/>
    </location>
</feature>
<accession>Q91ZS3</accession>
<accession>Q5PQW3</accession>
<comment type="function">
    <text evidence="6">A membrane-associated isoform may be involved in the exocytosis of zymogens by pancreatic acini. May regulate calcium-dependent activities in the endoplasmic reticulum lumen or post-ER compartment.</text>
</comment>
<comment type="subunit">
    <text evidence="6">A membrane-associated isoform interacts with STX3 and STXBP1.</text>
</comment>
<comment type="subcellular location">
    <subcellularLocation>
        <location evidence="2">Golgi apparatus lumen</location>
    </subcellularLocation>
</comment>
<comment type="alternative products">
    <event type="alternative splicing"/>
    <isoform>
        <id>Q91ZS3-1</id>
        <name>1</name>
        <sequence type="displayed"/>
    </isoform>
    <isoform>
        <id>Q91ZS3-2</id>
        <name>2</name>
        <sequence type="described" ref="VSP_037452"/>
    </isoform>
    <text>Additional isoforms seem to exist.</text>
</comment>
<comment type="tissue specificity">
    <text evidence="6 7">A membrane-associated isoform is expressed in acini of the pancreas (at protein level). Ubiquitous.</text>
</comment>
<comment type="induction">
    <text evidence="7">Down-regulated by ethanol. Down-regulated during the progression of cerebellum differentiation.</text>
</comment>
<comment type="domain">
    <text evidence="1">Binds calcium via its EF-hands.</text>
</comment>
<comment type="similarity">
    <text evidence="9">Belongs to the CREC family.</text>
</comment>
<reference key="1">
    <citation type="journal article" date="2008" name="J. Genet. Genomics">
        <title>The ethanol response gene Cab45 can modulate the impairment elicited by ethanol and ultraviolet in PC12 cells.</title>
        <authorList>
            <person name="Zhu Y."/>
            <person name="Wang Q."/>
            <person name="Xu W."/>
            <person name="Li S."/>
        </authorList>
    </citation>
    <scope>NUCLEOTIDE SEQUENCE [MRNA] (ISOFORM 1)</scope>
    <scope>TISSUE SPECIFICITY</scope>
    <scope>INDUCTION</scope>
    <source>
        <strain>BDIX</strain>
    </source>
</reference>
<reference key="2">
    <citation type="journal article" date="2004" name="Genome Res.">
        <title>The status, quality, and expansion of the NIH full-length cDNA project: the Mammalian Gene Collection (MGC).</title>
        <authorList>
            <consortium name="The MGC Project Team"/>
        </authorList>
    </citation>
    <scope>NUCLEOTIDE SEQUENCE [LARGE SCALE MRNA] (ISOFORM 2)</scope>
    <source>
        <tissue>Heart</tissue>
    </source>
</reference>
<reference key="3">
    <citation type="journal article" date="2007" name="Mol. Biol. Cell">
        <title>A cytosolic splice variant of Cab45 interacts with Munc18b and impacts on amylase secretion by pancreatic acini.</title>
        <authorList>
            <person name="Lam P.P."/>
            <person name="Hyvaerinen K."/>
            <person name="Kauppi M."/>
            <person name="Cosen-Binker L."/>
            <person name="Laitinen S."/>
            <person name="Keraenen S."/>
            <person name="Gaisano H.Y."/>
            <person name="Olkkonen V.M."/>
        </authorList>
    </citation>
    <scope>FUNCTION</scope>
    <scope>INTERACTION WITH STXBP1</scope>
    <scope>SUBCELLULAR LOCATION</scope>
    <scope>TISSUE SPECIFICITY</scope>
</reference>
<reference key="4">
    <citation type="journal article" date="2012" name="Nat. Commun.">
        <title>Quantitative maps of protein phosphorylation sites across 14 different rat organs and tissues.</title>
        <authorList>
            <person name="Lundby A."/>
            <person name="Secher A."/>
            <person name="Lage K."/>
            <person name="Nordsborg N.B."/>
            <person name="Dmytriyev A."/>
            <person name="Lundby C."/>
            <person name="Olsen J.V."/>
        </authorList>
    </citation>
    <scope>PHOSPHORYLATION [LARGE SCALE ANALYSIS] AT THR-192</scope>
    <scope>IDENTIFICATION BY MASS SPECTROMETRY [LARGE SCALE ANALYSIS]</scope>
</reference>
<keyword id="KW-0025">Alternative splicing</keyword>
<keyword id="KW-0106">Calcium</keyword>
<keyword id="KW-0268">Exocytosis</keyword>
<keyword id="KW-0325">Glycoprotein</keyword>
<keyword id="KW-0333">Golgi apparatus</keyword>
<keyword id="KW-0479">Metal-binding</keyword>
<keyword id="KW-0597">Phosphoprotein</keyword>
<keyword id="KW-1185">Reference proteome</keyword>
<keyword id="KW-0677">Repeat</keyword>
<keyword id="KW-0732">Signal</keyword>
<evidence type="ECO:0000250" key="1"/>
<evidence type="ECO:0000250" key="2">
    <source>
        <dbReference type="UniProtKB" id="Q61112"/>
    </source>
</evidence>
<evidence type="ECO:0000250" key="3">
    <source>
        <dbReference type="UniProtKB" id="Q9BRK5"/>
    </source>
</evidence>
<evidence type="ECO:0000255" key="4"/>
<evidence type="ECO:0000255" key="5">
    <source>
        <dbReference type="PROSITE-ProRule" id="PRU00448"/>
    </source>
</evidence>
<evidence type="ECO:0000269" key="6">
    <source>
    </source>
</evidence>
<evidence type="ECO:0000269" key="7">
    <source>
    </source>
</evidence>
<evidence type="ECO:0000303" key="8">
    <source>
    </source>
</evidence>
<evidence type="ECO:0000305" key="9"/>
<evidence type="ECO:0007744" key="10">
    <source>
    </source>
</evidence>
<name>CAB45_RAT</name>
<sequence>MVWLVAMTSRQRSLCGLAAHGLWFLGLVLLMDATARPANHSFSRERAANRDENEIIPPDHLNGVKLEMDGHLNKDFHQEVFLGKDMDGFDEDSEPRRSRRKLMVIFSKVDVNTDRRISAKEMQHWIMEKTAEHFQEAVKENKLHFRAVDPDGDGHVSWDEYKVKFLASKGHNEREIADAIKNHEELKVDEETQEVLGNLRDRWYQADNPPADLLLTEDEFLSFLHPEHSRGMLKFMVKEIVRDLDQDGDKQLSLPEFISLPVGTVENQQGQDIDDNWVKDRKKEFEELIDSNHDGIVTMEELENYMDPMNEYNALNEAKQMIAIADENQNHHLEPEEILKYSEFFTGSKLMDYARNVHEEF</sequence>